<organism>
    <name type="scientific">Staphylococcus aureus (strain MW2)</name>
    <dbReference type="NCBI Taxonomy" id="196620"/>
    <lineage>
        <taxon>Bacteria</taxon>
        <taxon>Bacillati</taxon>
        <taxon>Bacillota</taxon>
        <taxon>Bacilli</taxon>
        <taxon>Bacillales</taxon>
        <taxon>Staphylococcaceae</taxon>
        <taxon>Staphylococcus</taxon>
    </lineage>
</organism>
<sequence>MKKIRLELVYLRAIICAIIIITHLLTQITLKHENMEGGSLVLQFYIRNIVIFGTPCFIILSQLLTTLNYQKVTYRYLTTRVKYILIPYILMGLFYSYSESLLTDSSFNKQFIENVLLGQWYGYFIVVIMQFFILSYIIFKINYNLFNSKILLLLSFILQQSFLYYFTNNTAFHDTVLHYYPLSENTIIFGWIFYFFLGAYMGYNYERVLNFLERYLVIMIVLAVATYFVFIALANGDYWNVTSFSYSLTPYNSIMFIVILGICTHFKTMLFNTIQMISAFSFFIYLLHPIILDSLFAYTNIFEDNTMVFLAISLLFILGLCIGVGMILREFYIFRFIIGKQPYKLNINAY</sequence>
<feature type="chain" id="PRO_0000208077" description="Probable poly-beta-1,6-N-acetyl-D-glucosamine export protein">
    <location>
        <begin position="1"/>
        <end position="350"/>
    </location>
</feature>
<feature type="transmembrane region" description="Helical" evidence="2">
    <location>
        <begin position="7"/>
        <end position="29"/>
    </location>
</feature>
<feature type="transmembrane region" description="Helical" evidence="2">
    <location>
        <begin position="44"/>
        <end position="66"/>
    </location>
</feature>
<feature type="transmembrane region" description="Helical" evidence="2">
    <location>
        <begin position="79"/>
        <end position="101"/>
    </location>
</feature>
<feature type="transmembrane region" description="Helical" evidence="2">
    <location>
        <begin position="116"/>
        <end position="138"/>
    </location>
</feature>
<feature type="transmembrane region" description="Helical" evidence="2">
    <location>
        <begin position="145"/>
        <end position="167"/>
    </location>
</feature>
<feature type="transmembrane region" description="Helical" evidence="2">
    <location>
        <begin position="187"/>
        <end position="204"/>
    </location>
</feature>
<feature type="transmembrane region" description="Helical" evidence="2">
    <location>
        <begin position="211"/>
        <end position="233"/>
    </location>
</feature>
<feature type="transmembrane region" description="Helical" evidence="2">
    <location>
        <begin position="243"/>
        <end position="262"/>
    </location>
</feature>
<feature type="transmembrane region" description="Helical" evidence="2">
    <location>
        <begin position="269"/>
        <end position="291"/>
    </location>
</feature>
<feature type="transmembrane region" description="Helical" evidence="2">
    <location>
        <begin position="306"/>
        <end position="328"/>
    </location>
</feature>
<evidence type="ECO:0000250" key="1"/>
<evidence type="ECO:0000255" key="2"/>
<evidence type="ECO:0000305" key="3"/>
<gene>
    <name type="primary">icaC</name>
    <name type="ordered locus">MW2589</name>
</gene>
<dbReference type="EMBL" id="BA000033">
    <property type="protein sequence ID" value="BAB96454.1"/>
    <property type="molecule type" value="Genomic_DNA"/>
</dbReference>
<dbReference type="RefSeq" id="WP_000723836.1">
    <property type="nucleotide sequence ID" value="NC_003923.1"/>
</dbReference>
<dbReference type="KEGG" id="sam:MW2589"/>
<dbReference type="HOGENOM" id="CLU_064947_1_0_9"/>
<dbReference type="GO" id="GO:0005886">
    <property type="term" value="C:plasma membrane"/>
    <property type="evidence" value="ECO:0007669"/>
    <property type="project" value="UniProtKB-SubCell"/>
</dbReference>
<dbReference type="GO" id="GO:0016413">
    <property type="term" value="F:O-acetyltransferase activity"/>
    <property type="evidence" value="ECO:0007669"/>
    <property type="project" value="TreeGrafter"/>
</dbReference>
<dbReference type="GO" id="GO:0009246">
    <property type="term" value="P:enterobacterial common antigen biosynthetic process"/>
    <property type="evidence" value="ECO:0007669"/>
    <property type="project" value="TreeGrafter"/>
</dbReference>
<dbReference type="InterPro" id="IPR002656">
    <property type="entry name" value="Acyl_transf_3_dom"/>
</dbReference>
<dbReference type="PANTHER" id="PTHR40074">
    <property type="entry name" value="O-ACETYLTRANSFERASE WECH"/>
    <property type="match status" value="1"/>
</dbReference>
<dbReference type="PANTHER" id="PTHR40074:SF2">
    <property type="entry name" value="O-ACETYLTRANSFERASE WECH"/>
    <property type="match status" value="1"/>
</dbReference>
<dbReference type="Pfam" id="PF01757">
    <property type="entry name" value="Acyl_transf_3"/>
    <property type="match status" value="1"/>
</dbReference>
<reference key="1">
    <citation type="journal article" date="2002" name="Lancet">
        <title>Genome and virulence determinants of high virulence community-acquired MRSA.</title>
        <authorList>
            <person name="Baba T."/>
            <person name="Takeuchi F."/>
            <person name="Kuroda M."/>
            <person name="Yuzawa H."/>
            <person name="Aoki K."/>
            <person name="Oguchi A."/>
            <person name="Nagai Y."/>
            <person name="Iwama N."/>
            <person name="Asano K."/>
            <person name="Naimi T."/>
            <person name="Kuroda H."/>
            <person name="Cui L."/>
            <person name="Yamamoto K."/>
            <person name="Hiramatsu K."/>
        </authorList>
    </citation>
    <scope>NUCLEOTIDE SEQUENCE [LARGE SCALE GENOMIC DNA]</scope>
    <source>
        <strain>MW2</strain>
    </source>
</reference>
<protein>
    <recommendedName>
        <fullName>Probable poly-beta-1,6-N-acetyl-D-glucosamine export protein</fullName>
        <shortName>PGA export protein</shortName>
        <shortName>Poly-beta-1,6-GlcNAc export protein</shortName>
    </recommendedName>
    <alternativeName>
        <fullName>Biofilm polysaccharide intercellular adhesin export protein</fullName>
        <shortName>Biofilm PIA export protein</shortName>
    </alternativeName>
    <alternativeName>
        <fullName>Intercellular adhesion protein C</fullName>
    </alternativeName>
</protein>
<name>ICAC_STAAW</name>
<proteinExistence type="inferred from homology"/>
<comment type="function">
    <text evidence="1">Presumably involved in the export of the biofilm adhesin polysaccharide poly-beta-1,6-N-acetyl-D-glucosamine (PNAG, also referred to as PIA) across the cell membrane.</text>
</comment>
<comment type="subcellular location">
    <subcellularLocation>
        <location evidence="3">Cell membrane</location>
        <topology evidence="3">Multi-pass membrane protein</topology>
    </subcellularLocation>
</comment>
<comment type="similarity">
    <text evidence="3">Belongs to the acyltransferase 3 family.</text>
</comment>
<keyword id="KW-1003">Cell membrane</keyword>
<keyword id="KW-0472">Membrane</keyword>
<keyword id="KW-0812">Transmembrane</keyword>
<keyword id="KW-1133">Transmembrane helix</keyword>
<keyword id="KW-0813">Transport</keyword>
<accession>Q79ZV2</accession>